<reference key="1">
    <citation type="journal article" date="2004" name="Plant J.">
        <title>Molecular cloning and characterization of a cDNA encoding ent-cassa-12,15-diene synthase, a putative diterpenoid phytoalexin biosynthetic enzyme, from suspension-cultured rice cells treated with a chitin elicitor.</title>
        <authorList>
            <person name="Cho E.-M."/>
            <person name="Okada A."/>
            <person name="Kenmoku H."/>
            <person name="Otomo K."/>
            <person name="Toyomasu T."/>
            <person name="Mitsuhashi W."/>
            <person name="Sassa T."/>
            <person name="Yajima A."/>
            <person name="Yabuta G."/>
            <person name="Mori K."/>
            <person name="Oikawa H."/>
            <person name="Toshima H."/>
            <person name="Shibuya N."/>
            <person name="Nojiri H."/>
            <person name="Omori T."/>
            <person name="Nishiyama M."/>
            <person name="Yamane H."/>
        </authorList>
    </citation>
    <scope>NUCLEOTIDE SEQUENCE [MRNA]</scope>
    <scope>FUNCTION</scope>
    <scope>INDUCTION</scope>
</reference>
<reference key="2">
    <citation type="journal article" date="2005" name="Nature">
        <title>The map-based sequence of the rice genome.</title>
        <authorList>
            <consortium name="International rice genome sequencing project (IRGSP)"/>
        </authorList>
    </citation>
    <scope>NUCLEOTIDE SEQUENCE [LARGE SCALE GENOMIC DNA]</scope>
    <source>
        <strain>cv. Nipponbare</strain>
    </source>
</reference>
<reference key="3">
    <citation type="journal article" date="2008" name="Nucleic Acids Res.">
        <title>The rice annotation project database (RAP-DB): 2008 update.</title>
        <authorList>
            <consortium name="The rice annotation project (RAP)"/>
        </authorList>
    </citation>
    <scope>GENOME REANNOTATION</scope>
    <source>
        <strain>cv. Nipponbare</strain>
    </source>
</reference>
<reference key="4">
    <citation type="journal article" date="2013" name="Rice">
        <title>Improvement of the Oryza sativa Nipponbare reference genome using next generation sequence and optical map data.</title>
        <authorList>
            <person name="Kawahara Y."/>
            <person name="de la Bastide M."/>
            <person name="Hamilton J.P."/>
            <person name="Kanamori H."/>
            <person name="McCombie W.R."/>
            <person name="Ouyang S."/>
            <person name="Schwartz D.C."/>
            <person name="Tanaka T."/>
            <person name="Wu J."/>
            <person name="Zhou S."/>
            <person name="Childs K.L."/>
            <person name="Davidson R.M."/>
            <person name="Lin H."/>
            <person name="Quesada-Ocampo L."/>
            <person name="Vaillancourt B."/>
            <person name="Sakai H."/>
            <person name="Lee S.S."/>
            <person name="Kim J."/>
            <person name="Numa H."/>
            <person name="Itoh T."/>
            <person name="Buell C.R."/>
            <person name="Matsumoto T."/>
        </authorList>
    </citation>
    <scope>GENOME REANNOTATION</scope>
    <source>
        <strain>cv. Nipponbare</strain>
    </source>
</reference>
<reference key="5">
    <citation type="journal article" date="2005" name="PLoS Biol.">
        <title>The genomes of Oryza sativa: a history of duplications.</title>
        <authorList>
            <person name="Yu J."/>
            <person name="Wang J."/>
            <person name="Lin W."/>
            <person name="Li S."/>
            <person name="Li H."/>
            <person name="Zhou J."/>
            <person name="Ni P."/>
            <person name="Dong W."/>
            <person name="Hu S."/>
            <person name="Zeng C."/>
            <person name="Zhang J."/>
            <person name="Zhang Y."/>
            <person name="Li R."/>
            <person name="Xu Z."/>
            <person name="Li S."/>
            <person name="Li X."/>
            <person name="Zheng H."/>
            <person name="Cong L."/>
            <person name="Lin L."/>
            <person name="Yin J."/>
            <person name="Geng J."/>
            <person name="Li G."/>
            <person name="Shi J."/>
            <person name="Liu J."/>
            <person name="Lv H."/>
            <person name="Li J."/>
            <person name="Wang J."/>
            <person name="Deng Y."/>
            <person name="Ran L."/>
            <person name="Shi X."/>
            <person name="Wang X."/>
            <person name="Wu Q."/>
            <person name="Li C."/>
            <person name="Ren X."/>
            <person name="Wang J."/>
            <person name="Wang X."/>
            <person name="Li D."/>
            <person name="Liu D."/>
            <person name="Zhang X."/>
            <person name="Ji Z."/>
            <person name="Zhao W."/>
            <person name="Sun Y."/>
            <person name="Zhang Z."/>
            <person name="Bao J."/>
            <person name="Han Y."/>
            <person name="Dong L."/>
            <person name="Ji J."/>
            <person name="Chen P."/>
            <person name="Wu S."/>
            <person name="Liu J."/>
            <person name="Xiao Y."/>
            <person name="Bu D."/>
            <person name="Tan J."/>
            <person name="Yang L."/>
            <person name="Ye C."/>
            <person name="Zhang J."/>
            <person name="Xu J."/>
            <person name="Zhou Y."/>
            <person name="Yu Y."/>
            <person name="Zhang B."/>
            <person name="Zhuang S."/>
            <person name="Wei H."/>
            <person name="Liu B."/>
            <person name="Lei M."/>
            <person name="Yu H."/>
            <person name="Li Y."/>
            <person name="Xu H."/>
            <person name="Wei S."/>
            <person name="He X."/>
            <person name="Fang L."/>
            <person name="Zhang Z."/>
            <person name="Zhang Y."/>
            <person name="Huang X."/>
            <person name="Su Z."/>
            <person name="Tong W."/>
            <person name="Li J."/>
            <person name="Tong Z."/>
            <person name="Li S."/>
            <person name="Ye J."/>
            <person name="Wang L."/>
            <person name="Fang L."/>
            <person name="Lei T."/>
            <person name="Chen C.-S."/>
            <person name="Chen H.-C."/>
            <person name="Xu Z."/>
            <person name="Li H."/>
            <person name="Huang H."/>
            <person name="Zhang F."/>
            <person name="Xu H."/>
            <person name="Li N."/>
            <person name="Zhao C."/>
            <person name="Li S."/>
            <person name="Dong L."/>
            <person name="Huang Y."/>
            <person name="Li L."/>
            <person name="Xi Y."/>
            <person name="Qi Q."/>
            <person name="Li W."/>
            <person name="Zhang B."/>
            <person name="Hu W."/>
            <person name="Zhang Y."/>
            <person name="Tian X."/>
            <person name="Jiao Y."/>
            <person name="Liang X."/>
            <person name="Jin J."/>
            <person name="Gao L."/>
            <person name="Zheng W."/>
            <person name="Hao B."/>
            <person name="Liu S.-M."/>
            <person name="Wang W."/>
            <person name="Yuan L."/>
            <person name="Cao M."/>
            <person name="McDermott J."/>
            <person name="Samudrala R."/>
            <person name="Wang J."/>
            <person name="Wong G.K.-S."/>
            <person name="Yang H."/>
        </authorList>
    </citation>
    <scope>NUCLEOTIDE SEQUENCE [LARGE SCALE GENOMIC DNA]</scope>
    <source>
        <strain>cv. Nipponbare</strain>
    </source>
</reference>
<reference key="6">
    <citation type="journal article" date="2005" name="Plant Cell Rep.">
        <title>Isolation and characterization of a Ds-tagged rice (Oryza sativa L.) GA-responsive dwarf mutant defective in an early step of the gibberellin biosynthesis pathway.</title>
        <authorList>
            <person name="Margis-Pinheiro M."/>
            <person name="Zhou X.-R."/>
            <person name="Zhu Q.-H."/>
            <person name="Dennis E.S."/>
            <person name="Upadhyaya N.M."/>
        </authorList>
    </citation>
    <scope>TISSUE SPECIFICITY</scope>
    <scope>DEVELOPMENTAL STAGE</scope>
</reference>
<name>KSL7_ORYSJ</name>
<protein>
    <recommendedName>
        <fullName>Ent-cassa-12,15-diene synthase</fullName>
        <ecNumber>4.2.3.28</ecNumber>
    </recommendedName>
    <alternativeName>
        <fullName>Diterpene cyclase 1</fullName>
        <shortName>OsDTC1</shortName>
    </alternativeName>
    <alternativeName>
        <fullName>Ent-kaurene synthase-like 7</fullName>
        <shortName>OsKSL7</shortName>
    </alternativeName>
    <alternativeName>
        <fullName>OsKS3</fullName>
    </alternativeName>
</protein>
<comment type="function">
    <text evidence="3">Involved in phytocassane phytoalexins biosynthesis. Catalyzes the conversion of ent-copalyl diphosphate to the phytoalexin precursor ent-cassa-12,15-diene.</text>
</comment>
<comment type="catalytic activity">
    <reaction>
        <text>ent-copalyl diphosphate = ent-cassa-12,15-diene + diphosphate</text>
        <dbReference type="Rhea" id="RHEA:25532"/>
        <dbReference type="ChEBI" id="CHEBI:33019"/>
        <dbReference type="ChEBI" id="CHEBI:50060"/>
        <dbReference type="ChEBI" id="CHEBI:58553"/>
        <dbReference type="EC" id="4.2.3.28"/>
    </reaction>
</comment>
<comment type="cofactor">
    <cofactor evidence="1">
        <name>Mg(2+)</name>
        <dbReference type="ChEBI" id="CHEBI:18420"/>
    </cofactor>
    <text evidence="1">Binds 3 Mg(2+) ions per subunit.</text>
</comment>
<comment type="tissue specificity">
    <text evidence="4">Expressed in roots and stems.</text>
</comment>
<comment type="developmental stage">
    <text evidence="4">Expressed from 2 to 6 days after imbibition.</text>
</comment>
<comment type="induction">
    <text evidence="3">By chitin oligosaccharide elicitor and UV irradiation.</text>
</comment>
<comment type="domain">
    <text>The Asp-Asp-Xaa-Xaa-Asp/Glu (DDXXD/E) motif is important for the catalytic activity, presumably through binding to Mg(2+).</text>
</comment>
<comment type="miscellaneous">
    <text>Ent-cassa-12,15-diene is a precursor of the phytoalexins phytocassanes A-E. Phytoalexins are diterpenoid secondary metabolites involved in the defense mechanism of the plant and produced in response to attack (by a pathogen, elicitor or UV irradiation).</text>
</comment>
<comment type="similarity">
    <text evidence="5">Belongs to the terpene synthase family.</text>
</comment>
<comment type="sequence caution" evidence="5">
    <conflict type="erroneous initiation">
        <sequence resource="EMBL-CDS" id="BAD17672"/>
    </conflict>
</comment>
<comment type="sequence caution" evidence="5">
    <conflict type="erroneous initiation">
        <sequence resource="EMBL-CDS" id="EAZ23509"/>
    </conflict>
</comment>
<evidence type="ECO:0000250" key="1"/>
<evidence type="ECO:0000256" key="2">
    <source>
        <dbReference type="SAM" id="MobiDB-lite"/>
    </source>
</evidence>
<evidence type="ECO:0000269" key="3">
    <source>
    </source>
</evidence>
<evidence type="ECO:0000269" key="4">
    <source>
    </source>
</evidence>
<evidence type="ECO:0000305" key="5"/>
<dbReference type="EC" id="4.2.3.28"/>
<dbReference type="EMBL" id="AB089272">
    <property type="protein sequence ID" value="BAC56714.1"/>
    <property type="molecule type" value="mRNA"/>
</dbReference>
<dbReference type="EMBL" id="AP005835">
    <property type="protein sequence ID" value="BAD17672.1"/>
    <property type="status" value="ALT_INIT"/>
    <property type="molecule type" value="Genomic_DNA"/>
</dbReference>
<dbReference type="EMBL" id="AP008208">
    <property type="protein sequence ID" value="BAF09100.1"/>
    <property type="molecule type" value="Genomic_DNA"/>
</dbReference>
<dbReference type="EMBL" id="AP014958">
    <property type="protein sequence ID" value="BAS79338.1"/>
    <property type="molecule type" value="Genomic_DNA"/>
</dbReference>
<dbReference type="EMBL" id="CM000139">
    <property type="protein sequence ID" value="EAZ23509.1"/>
    <property type="status" value="ALT_INIT"/>
    <property type="molecule type" value="Genomic_DNA"/>
</dbReference>
<dbReference type="RefSeq" id="XP_015622683.1">
    <property type="nucleotide sequence ID" value="XM_015767197.1"/>
</dbReference>
<dbReference type="SMR" id="Q0E088"/>
<dbReference type="FunCoup" id="Q0E088">
    <property type="interactions" value="231"/>
</dbReference>
<dbReference type="STRING" id="39947.Q0E088"/>
<dbReference type="PaxDb" id="39947-Q0E088"/>
<dbReference type="EnsemblPlants" id="Os02t0570400-01">
    <property type="protein sequence ID" value="Os02t0570400-01"/>
    <property type="gene ID" value="Os02g0570400"/>
</dbReference>
<dbReference type="Gramene" id="Os02t0570400-01">
    <property type="protein sequence ID" value="Os02t0570400-01"/>
    <property type="gene ID" value="Os02g0570400"/>
</dbReference>
<dbReference type="KEGG" id="dosa:Os02g0570400"/>
<dbReference type="eggNOG" id="ENOG502QVGX">
    <property type="taxonomic scope" value="Eukaryota"/>
</dbReference>
<dbReference type="HOGENOM" id="CLU_003125_2_0_1"/>
<dbReference type="InParanoid" id="Q0E088"/>
<dbReference type="OMA" id="DEYMTNG"/>
<dbReference type="OrthoDB" id="2343925at2759"/>
<dbReference type="BioCyc" id="MetaCyc:DTC1-MONOMER"/>
<dbReference type="BRENDA" id="4.2.3.28">
    <property type="organism ID" value="4460"/>
</dbReference>
<dbReference type="PlantReactome" id="R-OSA-1119583">
    <property type="pathway name" value="Phytocassane biosynthesis"/>
</dbReference>
<dbReference type="Proteomes" id="UP000000763">
    <property type="component" value="Chromosome 2"/>
</dbReference>
<dbReference type="Proteomes" id="UP000007752">
    <property type="component" value="Chromosome 2"/>
</dbReference>
<dbReference type="Proteomes" id="UP000059680">
    <property type="component" value="Chromosome 2"/>
</dbReference>
<dbReference type="GO" id="GO:0034277">
    <property type="term" value="F:ent-cassa-12,15-diene synthase activity"/>
    <property type="evidence" value="ECO:0007669"/>
    <property type="project" value="UniProtKB-EC"/>
</dbReference>
<dbReference type="GO" id="GO:0000287">
    <property type="term" value="F:magnesium ion binding"/>
    <property type="evidence" value="ECO:0000318"/>
    <property type="project" value="GO_Central"/>
</dbReference>
<dbReference type="GO" id="GO:0010333">
    <property type="term" value="F:terpene synthase activity"/>
    <property type="evidence" value="ECO:0000318"/>
    <property type="project" value="GO_Central"/>
</dbReference>
<dbReference type="GO" id="GO:0006952">
    <property type="term" value="P:defense response"/>
    <property type="evidence" value="ECO:0007669"/>
    <property type="project" value="UniProtKB-KW"/>
</dbReference>
<dbReference type="GO" id="GO:0016102">
    <property type="term" value="P:diterpenoid biosynthetic process"/>
    <property type="evidence" value="ECO:0000318"/>
    <property type="project" value="GO_Central"/>
</dbReference>
<dbReference type="CDD" id="cd00684">
    <property type="entry name" value="Terpene_cyclase_plant_C1"/>
    <property type="match status" value="1"/>
</dbReference>
<dbReference type="FunFam" id="1.50.10.160:FF:000002">
    <property type="entry name" value="cis-abienol synthase, chloroplastic"/>
    <property type="match status" value="1"/>
</dbReference>
<dbReference type="FunFam" id="1.50.10.130:FF:000003">
    <property type="entry name" value="Ent-cassa-12,15-diene synthase"/>
    <property type="match status" value="1"/>
</dbReference>
<dbReference type="FunFam" id="1.10.600.10:FF:000005">
    <property type="entry name" value="Ent-kaur-16-ene synthase, chloroplastic"/>
    <property type="match status" value="1"/>
</dbReference>
<dbReference type="Gene3D" id="1.50.10.160">
    <property type="match status" value="1"/>
</dbReference>
<dbReference type="Gene3D" id="1.10.600.10">
    <property type="entry name" value="Farnesyl Diphosphate Synthase"/>
    <property type="match status" value="1"/>
</dbReference>
<dbReference type="Gene3D" id="1.50.10.130">
    <property type="entry name" value="Terpene synthase, N-terminal domain"/>
    <property type="match status" value="1"/>
</dbReference>
<dbReference type="InterPro" id="IPR008949">
    <property type="entry name" value="Isoprenoid_synthase_dom_sf"/>
</dbReference>
<dbReference type="InterPro" id="IPR044814">
    <property type="entry name" value="Terpene_cyclase_plant_C1"/>
</dbReference>
<dbReference type="InterPro" id="IPR001906">
    <property type="entry name" value="Terpene_synth_N"/>
</dbReference>
<dbReference type="InterPro" id="IPR036965">
    <property type="entry name" value="Terpene_synth_N_sf"/>
</dbReference>
<dbReference type="InterPro" id="IPR050148">
    <property type="entry name" value="Terpene_synthase-like"/>
</dbReference>
<dbReference type="InterPro" id="IPR005630">
    <property type="entry name" value="Terpene_synthase_metal-bd"/>
</dbReference>
<dbReference type="InterPro" id="IPR008930">
    <property type="entry name" value="Terpenoid_cyclase/PrenylTrfase"/>
</dbReference>
<dbReference type="PANTHER" id="PTHR31739">
    <property type="entry name" value="ENT-COPALYL DIPHOSPHATE SYNTHASE, CHLOROPLASTIC"/>
    <property type="match status" value="1"/>
</dbReference>
<dbReference type="PANTHER" id="PTHR31739:SF3">
    <property type="entry name" value="ENT-KAUR-16-ENE SYNTHASE, CHLOROPLASTIC"/>
    <property type="match status" value="1"/>
</dbReference>
<dbReference type="Pfam" id="PF01397">
    <property type="entry name" value="Terpene_synth"/>
    <property type="match status" value="1"/>
</dbReference>
<dbReference type="Pfam" id="PF03936">
    <property type="entry name" value="Terpene_synth_C"/>
    <property type="match status" value="1"/>
</dbReference>
<dbReference type="SFLD" id="SFLDG01014">
    <property type="entry name" value="Terpene_Cyclase_Like_1_N-term"/>
    <property type="match status" value="1"/>
</dbReference>
<dbReference type="SUPFAM" id="SSF48239">
    <property type="entry name" value="Terpenoid cyclases/Protein prenyltransferases"/>
    <property type="match status" value="2"/>
</dbReference>
<dbReference type="SUPFAM" id="SSF48576">
    <property type="entry name" value="Terpenoid synthases"/>
    <property type="match status" value="1"/>
</dbReference>
<sequence>MMLLGSPSSGGYGGKFAGASPAGGTTTMAPSAKQPSSRAPPPGITGGRNDLRILSPAAAAAAVGGLEMKKPEAEGIAESLQATHRKELEASIRKQLQGVELSPSPYDTAWVAMVPLRGSSHNPSFPQCVDWILENQWDDGSWSIDGSISTANKDVLSSTLACVLALNKWNVGREHIRRGLSFIGRNFSIAMDDQAVAPIGFGITFPAMLTLANGSGLEVPVRQNDIDSLNHLREMKIQREAGNHSRGRKAYMAYLAEGFGNLLEWDEIMMFQRKNGSLFNCPSSTAGALANYHDDKALQYLQSLVNKFDGVVPTLYPLNIYCQLSMVDALENMGISQYFASEIKSILDMTYSSWLGKDEEIMLDVTTCAMAFRLLRMNGYDVSSDELSHVAGASGFRDSLQGYLNDRKSVLEVYKTSKHSISENDLILDSIGSWSGSLLKEMLCSNGKGTPGREEIEFALKYPFYSTLERLVHRKNIVLFDAKGSQMLKTECMPVHDSQDFLALAVDDFCISQSNYQNELNYLESWVKDNRLDQLHFARQKITYCYLSGAATTFRPEMGYARTSWARTAWLTAVIDDLFDVGGLEQEQENLLALMEKWEEPGEDEYYSEDVKIVFQALYNTVNEIGAKASALQGHDVTKYLVDVWLHVVRCMKVEAEWQRSQHLPTFEEYMESGMVSLGQGCTVMSALFLIGEKLPEGIVELEEYDELFRLMGTCGRLLNDIRGIEREESDGKMTNGVSLLVHASGGSMSVDEAKTEVMKRIDASRRKLLSLVVSEQEGPIPRPCKQLFWKMCKILHLFYYQTDGFSSPKEMVSAVDAVINEPLQLRLL</sequence>
<organism>
    <name type="scientific">Oryza sativa subsp. japonica</name>
    <name type="common">Rice</name>
    <dbReference type="NCBI Taxonomy" id="39947"/>
    <lineage>
        <taxon>Eukaryota</taxon>
        <taxon>Viridiplantae</taxon>
        <taxon>Streptophyta</taxon>
        <taxon>Embryophyta</taxon>
        <taxon>Tracheophyta</taxon>
        <taxon>Spermatophyta</taxon>
        <taxon>Magnoliopsida</taxon>
        <taxon>Liliopsida</taxon>
        <taxon>Poales</taxon>
        <taxon>Poaceae</taxon>
        <taxon>BOP clade</taxon>
        <taxon>Oryzoideae</taxon>
        <taxon>Oryzeae</taxon>
        <taxon>Oryzinae</taxon>
        <taxon>Oryza</taxon>
        <taxon>Oryza sativa</taxon>
    </lineage>
</organism>
<accession>Q0E088</accession>
<accession>A0A0P0VKM2</accession>
<accession>Q6YV94</accession>
<accession>Q852S2</accession>
<gene>
    <name type="primary">KSL7</name>
    <name type="synonym">DTC1</name>
    <name type="ordered locus">Os02g0570400</name>
    <name type="ordered locus">LOC_Os02g36140</name>
    <name type="ORF">OsJ_006992</name>
    <name type="ORF">OSJNBa0008E01.23</name>
</gene>
<proteinExistence type="evidence at transcript level"/>
<feature type="chain" id="PRO_0000372320" description="Ent-cassa-12,15-diene synthase">
    <location>
        <begin position="1"/>
        <end position="829"/>
    </location>
</feature>
<feature type="region of interest" description="Disordered" evidence="2">
    <location>
        <begin position="1"/>
        <end position="50"/>
    </location>
</feature>
<feature type="short sequence motif" description="DDXXD motif">
    <location>
        <begin position="576"/>
        <end position="580"/>
    </location>
</feature>
<feature type="compositionally biased region" description="Polar residues" evidence="2">
    <location>
        <begin position="23"/>
        <end position="37"/>
    </location>
</feature>
<feature type="binding site" evidence="1">
    <location>
        <position position="576"/>
    </location>
    <ligand>
        <name>Mg(2+)</name>
        <dbReference type="ChEBI" id="CHEBI:18420"/>
        <label>1</label>
    </ligand>
</feature>
<feature type="binding site" evidence="1">
    <location>
        <position position="576"/>
    </location>
    <ligand>
        <name>Mg(2+)</name>
        <dbReference type="ChEBI" id="CHEBI:18420"/>
        <label>2</label>
    </ligand>
</feature>
<feature type="binding site" evidence="1">
    <location>
        <position position="580"/>
    </location>
    <ligand>
        <name>Mg(2+)</name>
        <dbReference type="ChEBI" id="CHEBI:18420"/>
        <label>1</label>
    </ligand>
</feature>
<feature type="binding site" evidence="1">
    <location>
        <position position="580"/>
    </location>
    <ligand>
        <name>Mg(2+)</name>
        <dbReference type="ChEBI" id="CHEBI:18420"/>
        <label>2</label>
    </ligand>
</feature>
<feature type="binding site" evidence="1">
    <location>
        <position position="720"/>
    </location>
    <ligand>
        <name>Mg(2+)</name>
        <dbReference type="ChEBI" id="CHEBI:18420"/>
        <label>3</label>
    </ligand>
</feature>
<feature type="binding site" evidence="1">
    <location>
        <position position="728"/>
    </location>
    <ligand>
        <name>Mg(2+)</name>
        <dbReference type="ChEBI" id="CHEBI:18420"/>
        <label>3</label>
    </ligand>
</feature>
<feature type="sequence conflict" description="In Ref. 1; BAC56714." evidence="5" ref="1">
    <original>G</original>
    <variation>GG</variation>
    <location>
        <position position="436"/>
    </location>
</feature>
<feature type="sequence conflict" description="In Ref. 1; BAC56714." evidence="5" ref="1">
    <original>C</original>
    <variation>S</variation>
    <location>
        <position position="444"/>
    </location>
</feature>
<feature type="sequence conflict" description="In Ref. 1; BAC56714." evidence="5" ref="1">
    <original>E</original>
    <variation>A</variation>
    <location>
        <position position="491"/>
    </location>
</feature>
<keyword id="KW-0456">Lyase</keyword>
<keyword id="KW-0460">Magnesium</keyword>
<keyword id="KW-0479">Metal-binding</keyword>
<keyword id="KW-0611">Plant defense</keyword>
<keyword id="KW-1185">Reference proteome</keyword>